<feature type="chain" id="PRO_0000148778" description="Aspartyl/glutamyl-tRNA(Asn/Gln) amidotransferase subunit B">
    <location>
        <begin position="1"/>
        <end position="475"/>
    </location>
</feature>
<evidence type="ECO:0000255" key="1">
    <source>
        <dbReference type="HAMAP-Rule" id="MF_00121"/>
    </source>
</evidence>
<keyword id="KW-0067">ATP-binding</keyword>
<keyword id="KW-0436">Ligase</keyword>
<keyword id="KW-0547">Nucleotide-binding</keyword>
<keyword id="KW-0648">Protein biosynthesis</keyword>
<keyword id="KW-1185">Reference proteome</keyword>
<protein>
    <recommendedName>
        <fullName evidence="1">Aspartyl/glutamyl-tRNA(Asn/Gln) amidotransferase subunit B</fullName>
        <shortName evidence="1">Asp/Glu-ADT subunit B</shortName>
        <ecNumber evidence="1">6.3.5.-</ecNumber>
    </recommendedName>
</protein>
<proteinExistence type="inferred from homology"/>
<organism>
    <name type="scientific">Chlorobaculum tepidum (strain ATCC 49652 / DSM 12025 / NBRC 103806 / TLS)</name>
    <name type="common">Chlorobium tepidum</name>
    <dbReference type="NCBI Taxonomy" id="194439"/>
    <lineage>
        <taxon>Bacteria</taxon>
        <taxon>Pseudomonadati</taxon>
        <taxon>Chlorobiota</taxon>
        <taxon>Chlorobiia</taxon>
        <taxon>Chlorobiales</taxon>
        <taxon>Chlorobiaceae</taxon>
        <taxon>Chlorobaculum</taxon>
    </lineage>
</organism>
<dbReference type="EC" id="6.3.5.-" evidence="1"/>
<dbReference type="EMBL" id="AE006470">
    <property type="protein sequence ID" value="AAM73431.1"/>
    <property type="molecule type" value="Genomic_DNA"/>
</dbReference>
<dbReference type="RefSeq" id="NP_663089.1">
    <property type="nucleotide sequence ID" value="NC_002932.3"/>
</dbReference>
<dbReference type="RefSeq" id="WP_010933868.1">
    <property type="nucleotide sequence ID" value="NC_002932.3"/>
</dbReference>
<dbReference type="SMR" id="Q8KAE8"/>
<dbReference type="STRING" id="194439.CT2215"/>
<dbReference type="EnsemblBacteria" id="AAM73431">
    <property type="protein sequence ID" value="AAM73431"/>
    <property type="gene ID" value="CT2215"/>
</dbReference>
<dbReference type="KEGG" id="cte:CT2215"/>
<dbReference type="PATRIC" id="fig|194439.7.peg.2011"/>
<dbReference type="eggNOG" id="COG0064">
    <property type="taxonomic scope" value="Bacteria"/>
</dbReference>
<dbReference type="HOGENOM" id="CLU_019240_0_0_10"/>
<dbReference type="OrthoDB" id="9804078at2"/>
<dbReference type="Proteomes" id="UP000001007">
    <property type="component" value="Chromosome"/>
</dbReference>
<dbReference type="GO" id="GO:0050566">
    <property type="term" value="F:asparaginyl-tRNA synthase (glutamine-hydrolyzing) activity"/>
    <property type="evidence" value="ECO:0007669"/>
    <property type="project" value="RHEA"/>
</dbReference>
<dbReference type="GO" id="GO:0005524">
    <property type="term" value="F:ATP binding"/>
    <property type="evidence" value="ECO:0007669"/>
    <property type="project" value="UniProtKB-KW"/>
</dbReference>
<dbReference type="GO" id="GO:0050567">
    <property type="term" value="F:glutaminyl-tRNA synthase (glutamine-hydrolyzing) activity"/>
    <property type="evidence" value="ECO:0007669"/>
    <property type="project" value="UniProtKB-UniRule"/>
</dbReference>
<dbReference type="GO" id="GO:0070681">
    <property type="term" value="P:glutaminyl-tRNAGln biosynthesis via transamidation"/>
    <property type="evidence" value="ECO:0007669"/>
    <property type="project" value="TreeGrafter"/>
</dbReference>
<dbReference type="GO" id="GO:0006412">
    <property type="term" value="P:translation"/>
    <property type="evidence" value="ECO:0007669"/>
    <property type="project" value="UniProtKB-UniRule"/>
</dbReference>
<dbReference type="FunFam" id="1.10.10.410:FF:000001">
    <property type="entry name" value="Aspartyl/glutamyl-tRNA(Asn/Gln) amidotransferase subunit B"/>
    <property type="match status" value="1"/>
</dbReference>
<dbReference type="FunFam" id="1.10.150.380:FF:000001">
    <property type="entry name" value="Aspartyl/glutamyl-tRNA(Asn/Gln) amidotransferase subunit B"/>
    <property type="match status" value="1"/>
</dbReference>
<dbReference type="Gene3D" id="1.10.10.410">
    <property type="match status" value="1"/>
</dbReference>
<dbReference type="Gene3D" id="1.10.150.380">
    <property type="entry name" value="GatB domain, N-terminal subdomain"/>
    <property type="match status" value="1"/>
</dbReference>
<dbReference type="HAMAP" id="MF_00121">
    <property type="entry name" value="GatB"/>
    <property type="match status" value="1"/>
</dbReference>
<dbReference type="InterPro" id="IPR017959">
    <property type="entry name" value="Asn/Gln-tRNA_amidoTrfase_suB/E"/>
</dbReference>
<dbReference type="InterPro" id="IPR006075">
    <property type="entry name" value="Asn/Gln-tRNA_Trfase_suB/E_cat"/>
</dbReference>
<dbReference type="InterPro" id="IPR018027">
    <property type="entry name" value="Asn/Gln_amidotransferase"/>
</dbReference>
<dbReference type="InterPro" id="IPR003789">
    <property type="entry name" value="Asn/Gln_tRNA_amidoTrase-B-like"/>
</dbReference>
<dbReference type="InterPro" id="IPR004413">
    <property type="entry name" value="GatB"/>
</dbReference>
<dbReference type="InterPro" id="IPR042114">
    <property type="entry name" value="GatB_C_1"/>
</dbReference>
<dbReference type="InterPro" id="IPR023168">
    <property type="entry name" value="GatB_Yqey_C_2"/>
</dbReference>
<dbReference type="InterPro" id="IPR017958">
    <property type="entry name" value="Gln-tRNA_amidoTrfase_suB_CS"/>
</dbReference>
<dbReference type="InterPro" id="IPR014746">
    <property type="entry name" value="Gln_synth/guanido_kin_cat_dom"/>
</dbReference>
<dbReference type="NCBIfam" id="TIGR00133">
    <property type="entry name" value="gatB"/>
    <property type="match status" value="1"/>
</dbReference>
<dbReference type="NCBIfam" id="NF004012">
    <property type="entry name" value="PRK05477.1-2"/>
    <property type="match status" value="1"/>
</dbReference>
<dbReference type="NCBIfam" id="NF004014">
    <property type="entry name" value="PRK05477.1-4"/>
    <property type="match status" value="1"/>
</dbReference>
<dbReference type="NCBIfam" id="NF004015">
    <property type="entry name" value="PRK05477.1-5"/>
    <property type="match status" value="1"/>
</dbReference>
<dbReference type="PANTHER" id="PTHR11659">
    <property type="entry name" value="GLUTAMYL-TRNA GLN AMIDOTRANSFERASE SUBUNIT B MITOCHONDRIAL AND PROKARYOTIC PET112-RELATED"/>
    <property type="match status" value="1"/>
</dbReference>
<dbReference type="PANTHER" id="PTHR11659:SF0">
    <property type="entry name" value="GLUTAMYL-TRNA(GLN) AMIDOTRANSFERASE SUBUNIT B, MITOCHONDRIAL"/>
    <property type="match status" value="1"/>
</dbReference>
<dbReference type="Pfam" id="PF02934">
    <property type="entry name" value="GatB_N"/>
    <property type="match status" value="1"/>
</dbReference>
<dbReference type="Pfam" id="PF02637">
    <property type="entry name" value="GatB_Yqey"/>
    <property type="match status" value="1"/>
</dbReference>
<dbReference type="SMART" id="SM00845">
    <property type="entry name" value="GatB_Yqey"/>
    <property type="match status" value="1"/>
</dbReference>
<dbReference type="SUPFAM" id="SSF89095">
    <property type="entry name" value="GatB/YqeY motif"/>
    <property type="match status" value="1"/>
</dbReference>
<dbReference type="SUPFAM" id="SSF55931">
    <property type="entry name" value="Glutamine synthetase/guanido kinase"/>
    <property type="match status" value="1"/>
</dbReference>
<dbReference type="PROSITE" id="PS01234">
    <property type="entry name" value="GATB"/>
    <property type="match status" value="1"/>
</dbReference>
<name>GATB_CHLTE</name>
<reference key="1">
    <citation type="journal article" date="2002" name="Proc. Natl. Acad. Sci. U.S.A.">
        <title>The complete genome sequence of Chlorobium tepidum TLS, a photosynthetic, anaerobic, green-sulfur bacterium.</title>
        <authorList>
            <person name="Eisen J.A."/>
            <person name="Nelson K.E."/>
            <person name="Paulsen I.T."/>
            <person name="Heidelberg J.F."/>
            <person name="Wu M."/>
            <person name="Dodson R.J."/>
            <person name="DeBoy R.T."/>
            <person name="Gwinn M.L."/>
            <person name="Nelson W.C."/>
            <person name="Haft D.H."/>
            <person name="Hickey E.K."/>
            <person name="Peterson J.D."/>
            <person name="Durkin A.S."/>
            <person name="Kolonay J.F."/>
            <person name="Yang F."/>
            <person name="Holt I.E."/>
            <person name="Umayam L.A."/>
            <person name="Mason T.M."/>
            <person name="Brenner M."/>
            <person name="Shea T.P."/>
            <person name="Parksey D.S."/>
            <person name="Nierman W.C."/>
            <person name="Feldblyum T.V."/>
            <person name="Hansen C.L."/>
            <person name="Craven M.B."/>
            <person name="Radune D."/>
            <person name="Vamathevan J.J."/>
            <person name="Khouri H.M."/>
            <person name="White O."/>
            <person name="Gruber T.M."/>
            <person name="Ketchum K.A."/>
            <person name="Venter J.C."/>
            <person name="Tettelin H."/>
            <person name="Bryant D.A."/>
            <person name="Fraser C.M."/>
        </authorList>
    </citation>
    <scope>NUCLEOTIDE SEQUENCE [LARGE SCALE GENOMIC DNA]</scope>
    <source>
        <strain>ATCC 49652 / DSM 12025 / NBRC 103806 / TLS</strain>
    </source>
</reference>
<sequence length="475" mass="53092">MNYEIVVGLEVHCQLNTESKAFCGCSAKFGKPANTNVCPVCLALPGALPVLNARVVEDAVKLGLATNCTIARHSILARKNYFYPDLPKGYQISQYEEPICSEGVIHIDLEEGGKDVRLVRIHIEEDAGKSIHDIGDDTYIDVNRCGVPLLEIVSYPDMRTPKEASAYLQKLRQIVRYLGISDGNMEEGSLRCDANVSVRPVGATEYGTRTEIKNMNSFRNVERAIEYEAKRHIEVIEGGGTIVQETRLWDADKLETRSMRGKEHAHDYRYFPDPDLVPVLVDDGMIRRMQEELPEFPEDRAARFVSEFGIPAYDAGVITVDRELADYFESTVKVSGDAKASSNWVMGEVMRTLKEKYLDIHKFAISPERLGGLIKLINAGAISNTIAKQVFEIMQQDEATAEAIVEREGLAQVSDRGAIEAAIREILEANQKQLEQYRSGKTQLFGFFVGQCMQKMKGKANPKMVNDILRSMLDA</sequence>
<comment type="function">
    <text evidence="1">Allows the formation of correctly charged Asn-tRNA(Asn) or Gln-tRNA(Gln) through the transamidation of misacylated Asp-tRNA(Asn) or Glu-tRNA(Gln) in organisms which lack either or both of asparaginyl-tRNA or glutaminyl-tRNA synthetases. The reaction takes place in the presence of glutamine and ATP through an activated phospho-Asp-tRNA(Asn) or phospho-Glu-tRNA(Gln).</text>
</comment>
<comment type="catalytic activity">
    <reaction evidence="1">
        <text>L-glutamyl-tRNA(Gln) + L-glutamine + ATP + H2O = L-glutaminyl-tRNA(Gln) + L-glutamate + ADP + phosphate + H(+)</text>
        <dbReference type="Rhea" id="RHEA:17521"/>
        <dbReference type="Rhea" id="RHEA-COMP:9681"/>
        <dbReference type="Rhea" id="RHEA-COMP:9684"/>
        <dbReference type="ChEBI" id="CHEBI:15377"/>
        <dbReference type="ChEBI" id="CHEBI:15378"/>
        <dbReference type="ChEBI" id="CHEBI:29985"/>
        <dbReference type="ChEBI" id="CHEBI:30616"/>
        <dbReference type="ChEBI" id="CHEBI:43474"/>
        <dbReference type="ChEBI" id="CHEBI:58359"/>
        <dbReference type="ChEBI" id="CHEBI:78520"/>
        <dbReference type="ChEBI" id="CHEBI:78521"/>
        <dbReference type="ChEBI" id="CHEBI:456216"/>
    </reaction>
</comment>
<comment type="catalytic activity">
    <reaction evidence="1">
        <text>L-aspartyl-tRNA(Asn) + L-glutamine + ATP + H2O = L-asparaginyl-tRNA(Asn) + L-glutamate + ADP + phosphate + 2 H(+)</text>
        <dbReference type="Rhea" id="RHEA:14513"/>
        <dbReference type="Rhea" id="RHEA-COMP:9674"/>
        <dbReference type="Rhea" id="RHEA-COMP:9677"/>
        <dbReference type="ChEBI" id="CHEBI:15377"/>
        <dbReference type="ChEBI" id="CHEBI:15378"/>
        <dbReference type="ChEBI" id="CHEBI:29985"/>
        <dbReference type="ChEBI" id="CHEBI:30616"/>
        <dbReference type="ChEBI" id="CHEBI:43474"/>
        <dbReference type="ChEBI" id="CHEBI:58359"/>
        <dbReference type="ChEBI" id="CHEBI:78515"/>
        <dbReference type="ChEBI" id="CHEBI:78516"/>
        <dbReference type="ChEBI" id="CHEBI:456216"/>
    </reaction>
</comment>
<comment type="subunit">
    <text evidence="1">Heterotrimer of A, B and C subunits.</text>
</comment>
<comment type="similarity">
    <text evidence="1">Belongs to the GatB/GatE family. GatB subfamily.</text>
</comment>
<accession>Q8KAE8</accession>
<gene>
    <name evidence="1" type="primary">gatB</name>
    <name type="ordered locus">CT2215</name>
</gene>